<sequence>MELLRTITYQPAAGTKMCEQALGKACGGDSKKKRPQQPSEDGQPQAQVTPAAPHHHHHHSHSGPEISRIIVDPTTGKRYCRGKVLGKGGFAKCYEMTDLTNNKVYAAKIIPHSRVAKPHQREKIDKEIELHRLLHHKHVVQFYHYFEDKENIYILLEYCSRRSMAHILKARKVLTEPEVRYYLRQIVSGLKYLHEQEILHRDLKLGNFFINEAMELKVGDFGLAARLEPLEHRRRTICGTPNYLSPEVLNKQGHGCESDIWALGCVMYTMLLGRPPFETTNLKETYRCIREARYTMPSSLLAPAKHLIASMLSKNPEDRPSLDDIIRHDFFLQGFTPDRLSSSCCHTVPDFHLSSPAKNFFKKAAAALFGGKKDKARYNDTHNKVSKEDEDIYKLRHDLKKVSITQQPSKHRADEEPQPPPTTVARSGTSAVENKQQIGDAIRMIVRGTLGSCSSSSECLEDSTMGSVADTVARVLRGCLENMPEADCIPKEQLSTSFQWVTKWVDYSNKYGFGYQLSDHTVGVLFNNGAHMSLLPDKKTVHYYAELGQCSVFPATDAPEQFISQVTVLKYFSHYMEENLMDGGDLPSVTDIRRPRLYLLQWLKSDKALMMLFNDGTFQVNFYHDHTKIIICNQSEEYLLTYINEDRISTTFRLTTLLMSGCSLELKNRMEYALNMLLQRCN</sequence>
<reference key="1">
    <citation type="journal article" date="1992" name="Mol. Cell. Biol.">
        <title>Identification of an early-growth-response gene encoding a novel putative protein kinase.</title>
        <authorList>
            <person name="Simmons D.L."/>
            <person name="Neel B.G."/>
            <person name="Stevens R."/>
            <person name="Evett G."/>
            <person name="Erikson R.L."/>
        </authorList>
    </citation>
    <scope>NUCLEOTIDE SEQUENCE [MRNA]</scope>
    <scope>TISSUE SPECIFICITY</scope>
    <scope>INDUCTION</scope>
</reference>
<reference key="2">
    <citation type="journal article" date="2003" name="Mol. Cancer Res.">
        <title>The serum-inducible protein kinase Snk is a G1 phase polo-like kinase that is inhibited by the calcium- and integrin-binding protein CIB.</title>
        <authorList>
            <person name="Ma S."/>
            <person name="Liu M.A."/>
            <person name="Yuan Y.L."/>
            <person name="Erikson R.L."/>
        </authorList>
    </citation>
    <scope>FUNCTION</scope>
    <scope>DEVELOPMENTAL STAGE</scope>
    <scope>PHOSPHORYLATION AT THR-236</scope>
    <scope>MUTAGENESIS OF LYS-108 AND THR-236</scope>
</reference>
<reference key="3">
    <citation type="journal article" date="2003" name="Mol. Cell. Biol.">
        <title>Silencing of the novel p53 target gene Snk/Plk2 leads to mitotic catastrophe in paclitaxel (taxol)-exposed cells.</title>
        <authorList>
            <person name="Burns T.F."/>
            <person name="Fei P."/>
            <person name="Scata K.A."/>
            <person name="Dicker D.T."/>
            <person name="El-Deiry W.S."/>
        </authorList>
    </citation>
    <scope>FUNCTION</scope>
    <scope>INDUCTION</scope>
    <scope>MUTAGENESIS OF THR-236</scope>
</reference>
<reference key="4">
    <citation type="journal article" date="2003" name="Mol. Cell. Biol.">
        <title>Role of Plk2 (Snk) in mouse development and cell proliferation.</title>
        <authorList>
            <person name="Ma S."/>
            <person name="Charron J."/>
            <person name="Erikson R.L."/>
        </authorList>
    </citation>
    <scope>DISRUPTION PHENOTYPE</scope>
</reference>
<reference key="5">
    <citation type="journal article" date="2009" name="J. Biol. Chem.">
        <title>Polo-like kinase 2 (PLK2) phosphorylates alpha-synuclein at serine 129 in central nervous system.</title>
        <authorList>
            <person name="Inglis K.J."/>
            <person name="Chereau D."/>
            <person name="Brigham E.F."/>
            <person name="Chiou S.S."/>
            <person name="Schobel S."/>
            <person name="Frigon N.L."/>
            <person name="Yu M."/>
            <person name="Caccavello R.J."/>
            <person name="Nelson S."/>
            <person name="Motter R."/>
            <person name="Wright S."/>
            <person name="Chian D."/>
            <person name="Santiago P."/>
            <person name="Soriano F."/>
            <person name="Ramos C."/>
            <person name="Powell K."/>
            <person name="Goldstein J.M."/>
            <person name="Babcock M."/>
            <person name="Yednock T."/>
            <person name="Bard F."/>
            <person name="Basi G.S."/>
            <person name="Sham H."/>
            <person name="Chilcote T.J."/>
            <person name="McConlogue L."/>
            <person name="Griswold-Prenner I."/>
            <person name="Anderson J.P."/>
        </authorList>
    </citation>
    <scope>FUNCTION IN PHOSPHORYLATION OF SNCA</scope>
</reference>
<reference key="6">
    <citation type="journal article" date="2011" name="Neuron">
        <title>Requirement for Plk2 in orchestrated ras and rap signaling, homeostatic structural plasticity, and memory.</title>
        <authorList>
            <person name="Lee K.J."/>
            <person name="Lee Y."/>
            <person name="Rozeboom A."/>
            <person name="Lee J.Y."/>
            <person name="Udagawa N."/>
            <person name="Hoe H.S."/>
            <person name="Pak D.T."/>
        </authorList>
    </citation>
    <scope>FUNCTION</scope>
    <scope>MUTAGENESIS OF LYS-108</scope>
    <scope>DISRUPTION PHENOTYPE</scope>
</reference>
<accession>P53351</accession>
<proteinExistence type="evidence at protein level"/>
<organism>
    <name type="scientific">Mus musculus</name>
    <name type="common">Mouse</name>
    <dbReference type="NCBI Taxonomy" id="10090"/>
    <lineage>
        <taxon>Eukaryota</taxon>
        <taxon>Metazoa</taxon>
        <taxon>Chordata</taxon>
        <taxon>Craniata</taxon>
        <taxon>Vertebrata</taxon>
        <taxon>Euteleostomi</taxon>
        <taxon>Mammalia</taxon>
        <taxon>Eutheria</taxon>
        <taxon>Euarchontoglires</taxon>
        <taxon>Glires</taxon>
        <taxon>Rodentia</taxon>
        <taxon>Myomorpha</taxon>
        <taxon>Muroidea</taxon>
        <taxon>Muridae</taxon>
        <taxon>Murinae</taxon>
        <taxon>Mus</taxon>
        <taxon>Mus</taxon>
    </lineage>
</organism>
<dbReference type="EC" id="2.7.11.21"/>
<dbReference type="EMBL" id="M96163">
    <property type="status" value="NOT_ANNOTATED_CDS"/>
    <property type="molecule type" value="mRNA"/>
</dbReference>
<dbReference type="CCDS" id="CCDS26767.1"/>
<dbReference type="PIR" id="A44493">
    <property type="entry name" value="A44493"/>
</dbReference>
<dbReference type="RefSeq" id="NP_690017.2">
    <property type="nucleotide sequence ID" value="NM_152804.2"/>
</dbReference>
<dbReference type="SMR" id="P53351"/>
<dbReference type="BioGRID" id="203368">
    <property type="interactions" value="10"/>
</dbReference>
<dbReference type="FunCoup" id="P53351">
    <property type="interactions" value="380"/>
</dbReference>
<dbReference type="IntAct" id="P53351">
    <property type="interactions" value="9"/>
</dbReference>
<dbReference type="STRING" id="10090.ENSMUSP00000022212"/>
<dbReference type="GlyGen" id="P53351">
    <property type="glycosylation" value="1 site"/>
</dbReference>
<dbReference type="iPTMnet" id="P53351"/>
<dbReference type="PhosphoSitePlus" id="P53351"/>
<dbReference type="PaxDb" id="10090-ENSMUSP00000022212"/>
<dbReference type="ProteomicsDB" id="289545"/>
<dbReference type="Antibodypedia" id="4042">
    <property type="antibodies" value="256 antibodies from 32 providers"/>
</dbReference>
<dbReference type="DNASU" id="20620"/>
<dbReference type="Ensembl" id="ENSMUST00000022212.9">
    <property type="protein sequence ID" value="ENSMUSP00000022212.8"/>
    <property type="gene ID" value="ENSMUSG00000021701.9"/>
</dbReference>
<dbReference type="GeneID" id="20620"/>
<dbReference type="KEGG" id="mmu:20620"/>
<dbReference type="UCSC" id="uc007rvs.2">
    <property type="organism name" value="mouse"/>
</dbReference>
<dbReference type="AGR" id="MGI:1099790"/>
<dbReference type="CTD" id="10769"/>
<dbReference type="MGI" id="MGI:1099790">
    <property type="gene designation" value="Plk2"/>
</dbReference>
<dbReference type="VEuPathDB" id="HostDB:ENSMUSG00000021701"/>
<dbReference type="eggNOG" id="KOG0575">
    <property type="taxonomic scope" value="Eukaryota"/>
</dbReference>
<dbReference type="GeneTree" id="ENSGT00940000158739"/>
<dbReference type="HOGENOM" id="CLU_000288_46_1_1"/>
<dbReference type="InParanoid" id="P53351"/>
<dbReference type="OMA" id="NMPESDH"/>
<dbReference type="OrthoDB" id="408964at2759"/>
<dbReference type="PhylomeDB" id="P53351"/>
<dbReference type="TreeFam" id="TF101089"/>
<dbReference type="BRENDA" id="2.7.11.21">
    <property type="organism ID" value="3474"/>
</dbReference>
<dbReference type="Reactome" id="R-MMU-6804115">
    <property type="pathway name" value="TP53 regulates transcription of additional cell cycle genes whose exact role in the p53 pathway remain uncertain"/>
</dbReference>
<dbReference type="BioGRID-ORCS" id="20620">
    <property type="hits" value="3 hits in 81 CRISPR screens"/>
</dbReference>
<dbReference type="ChiTaRS" id="Plk2">
    <property type="organism name" value="mouse"/>
</dbReference>
<dbReference type="PRO" id="PR:P53351"/>
<dbReference type="Proteomes" id="UP000000589">
    <property type="component" value="Chromosome 13"/>
</dbReference>
<dbReference type="RNAct" id="P53351">
    <property type="molecule type" value="protein"/>
</dbReference>
<dbReference type="Bgee" id="ENSMUSG00000021701">
    <property type="expression patterns" value="Expressed in CA3 field of hippocampus and 278 other cell types or tissues"/>
</dbReference>
<dbReference type="ExpressionAtlas" id="P53351">
    <property type="expression patterns" value="baseline and differential"/>
</dbReference>
<dbReference type="GO" id="GO:0005814">
    <property type="term" value="C:centriole"/>
    <property type="evidence" value="ECO:0000250"/>
    <property type="project" value="UniProtKB"/>
</dbReference>
<dbReference type="GO" id="GO:0005813">
    <property type="term" value="C:centrosome"/>
    <property type="evidence" value="ECO:0000250"/>
    <property type="project" value="UniProtKB"/>
</dbReference>
<dbReference type="GO" id="GO:0000785">
    <property type="term" value="C:chromatin"/>
    <property type="evidence" value="ECO:0000314"/>
    <property type="project" value="MGI"/>
</dbReference>
<dbReference type="GO" id="GO:0005737">
    <property type="term" value="C:cytoplasm"/>
    <property type="evidence" value="ECO:0007669"/>
    <property type="project" value="UniProtKB-KW"/>
</dbReference>
<dbReference type="GO" id="GO:0030425">
    <property type="term" value="C:dendrite"/>
    <property type="evidence" value="ECO:0000250"/>
    <property type="project" value="UniProtKB"/>
</dbReference>
<dbReference type="GO" id="GO:0005654">
    <property type="term" value="C:nucleoplasm"/>
    <property type="evidence" value="ECO:0000304"/>
    <property type="project" value="Reactome"/>
</dbReference>
<dbReference type="GO" id="GO:0005524">
    <property type="term" value="F:ATP binding"/>
    <property type="evidence" value="ECO:0007669"/>
    <property type="project" value="UniProtKB-KW"/>
</dbReference>
<dbReference type="GO" id="GO:0043008">
    <property type="term" value="F:ATP-dependent protein binding"/>
    <property type="evidence" value="ECO:0007669"/>
    <property type="project" value="Ensembl"/>
</dbReference>
<dbReference type="GO" id="GO:0106310">
    <property type="term" value="F:protein serine kinase activity"/>
    <property type="evidence" value="ECO:0007669"/>
    <property type="project" value="RHEA"/>
</dbReference>
<dbReference type="GO" id="GO:0004674">
    <property type="term" value="F:protein serine/threonine kinase activity"/>
    <property type="evidence" value="ECO:0000314"/>
    <property type="project" value="UniProtKB"/>
</dbReference>
<dbReference type="GO" id="GO:0000082">
    <property type="term" value="P:G1/S transition of mitotic cell cycle"/>
    <property type="evidence" value="ECO:0000250"/>
    <property type="project" value="UniProtKB"/>
</dbReference>
<dbReference type="GO" id="GO:0060292">
    <property type="term" value="P:long-term synaptic depression"/>
    <property type="evidence" value="ECO:0000250"/>
    <property type="project" value="UniProtKB"/>
</dbReference>
<dbReference type="GO" id="GO:0060291">
    <property type="term" value="P:long-term synaptic potentiation"/>
    <property type="evidence" value="ECO:0000250"/>
    <property type="project" value="UniProtKB"/>
</dbReference>
<dbReference type="GO" id="GO:0007613">
    <property type="term" value="P:memory"/>
    <property type="evidence" value="ECO:0000315"/>
    <property type="project" value="UniProtKB"/>
</dbReference>
<dbReference type="GO" id="GO:0000278">
    <property type="term" value="P:mitotic cell cycle"/>
    <property type="evidence" value="ECO:0000315"/>
    <property type="project" value="MGI"/>
</dbReference>
<dbReference type="GO" id="GO:0007052">
    <property type="term" value="P:mitotic spindle organization"/>
    <property type="evidence" value="ECO:0000315"/>
    <property type="project" value="UniProtKB"/>
</dbReference>
<dbReference type="GO" id="GO:0016525">
    <property type="term" value="P:negative regulation of angiogenesis"/>
    <property type="evidence" value="ECO:0000315"/>
    <property type="project" value="BHF-UCL"/>
</dbReference>
<dbReference type="GO" id="GO:0043066">
    <property type="term" value="P:negative regulation of apoptotic process"/>
    <property type="evidence" value="ECO:0000315"/>
    <property type="project" value="UniProtKB"/>
</dbReference>
<dbReference type="GO" id="GO:0071866">
    <property type="term" value="P:negative regulation of apoptotic process in bone marrow cell"/>
    <property type="evidence" value="ECO:0000315"/>
    <property type="project" value="BHF-UCL"/>
</dbReference>
<dbReference type="GO" id="GO:2000773">
    <property type="term" value="P:negative regulation of cellular senescence"/>
    <property type="evidence" value="ECO:0000315"/>
    <property type="project" value="BHF-UCL"/>
</dbReference>
<dbReference type="GO" id="GO:0010508">
    <property type="term" value="P:positive regulation of autophagy"/>
    <property type="evidence" value="ECO:0007669"/>
    <property type="project" value="Ensembl"/>
</dbReference>
<dbReference type="GO" id="GO:0090050">
    <property type="term" value="P:positive regulation of cell migration involved in sprouting angiogenesis"/>
    <property type="evidence" value="ECO:0000315"/>
    <property type="project" value="BHF-UCL"/>
</dbReference>
<dbReference type="GO" id="GO:0045732">
    <property type="term" value="P:positive regulation of protein catabolic process"/>
    <property type="evidence" value="ECO:0007669"/>
    <property type="project" value="Ensembl"/>
</dbReference>
<dbReference type="GO" id="GO:0006468">
    <property type="term" value="P:protein phosphorylation"/>
    <property type="evidence" value="ECO:0000314"/>
    <property type="project" value="UniProtKB"/>
</dbReference>
<dbReference type="GO" id="GO:0032486">
    <property type="term" value="P:Rap protein signal transduction"/>
    <property type="evidence" value="ECO:0000250"/>
    <property type="project" value="UniProtKB"/>
</dbReference>
<dbReference type="GO" id="GO:0007265">
    <property type="term" value="P:Ras protein signal transduction"/>
    <property type="evidence" value="ECO:0000250"/>
    <property type="project" value="UniProtKB"/>
</dbReference>
<dbReference type="GO" id="GO:0046599">
    <property type="term" value="P:regulation of centriole replication"/>
    <property type="evidence" value="ECO:0000250"/>
    <property type="project" value="UniProtKB"/>
</dbReference>
<dbReference type="GO" id="GO:0048167">
    <property type="term" value="P:regulation of synaptic plasticity"/>
    <property type="evidence" value="ECO:0000315"/>
    <property type="project" value="UniProtKB"/>
</dbReference>
<dbReference type="CDD" id="cd13118">
    <property type="entry name" value="POLO_box_1"/>
    <property type="match status" value="1"/>
</dbReference>
<dbReference type="CDD" id="cd13117">
    <property type="entry name" value="POLO_box_2"/>
    <property type="match status" value="1"/>
</dbReference>
<dbReference type="CDD" id="cd14188">
    <property type="entry name" value="STKc_PLK2"/>
    <property type="match status" value="1"/>
</dbReference>
<dbReference type="FunFam" id="1.10.510.10:FF:001498">
    <property type="entry name" value="Serine/threonine-protein kinase PLK"/>
    <property type="match status" value="1"/>
</dbReference>
<dbReference type="FunFam" id="3.30.1120.30:FF:000001">
    <property type="entry name" value="Serine/threonine-protein kinase PLK"/>
    <property type="match status" value="1"/>
</dbReference>
<dbReference type="FunFam" id="3.30.200.20:FF:000091">
    <property type="entry name" value="Serine/threonine-protein kinase PLK"/>
    <property type="match status" value="1"/>
</dbReference>
<dbReference type="Gene3D" id="3.30.200.20">
    <property type="entry name" value="Phosphorylase Kinase, domain 1"/>
    <property type="match status" value="1"/>
</dbReference>
<dbReference type="Gene3D" id="3.30.1120.30">
    <property type="entry name" value="POLO box domain"/>
    <property type="match status" value="2"/>
</dbReference>
<dbReference type="Gene3D" id="1.10.510.10">
    <property type="entry name" value="Transferase(Phosphotransferase) domain 1"/>
    <property type="match status" value="1"/>
</dbReference>
<dbReference type="InterPro" id="IPR011009">
    <property type="entry name" value="Kinase-like_dom_sf"/>
</dbReference>
<dbReference type="InterPro" id="IPR042825">
    <property type="entry name" value="PLK2_STKc"/>
</dbReference>
<dbReference type="InterPro" id="IPR033701">
    <property type="entry name" value="POLO_box_1"/>
</dbReference>
<dbReference type="InterPro" id="IPR033695">
    <property type="entry name" value="POLO_box_2"/>
</dbReference>
<dbReference type="InterPro" id="IPR000959">
    <property type="entry name" value="POLO_box_dom"/>
</dbReference>
<dbReference type="InterPro" id="IPR036947">
    <property type="entry name" value="POLO_box_dom_sf"/>
</dbReference>
<dbReference type="InterPro" id="IPR000719">
    <property type="entry name" value="Prot_kinase_dom"/>
</dbReference>
<dbReference type="InterPro" id="IPR017441">
    <property type="entry name" value="Protein_kinase_ATP_BS"/>
</dbReference>
<dbReference type="InterPro" id="IPR008271">
    <property type="entry name" value="Ser/Thr_kinase_AS"/>
</dbReference>
<dbReference type="PANTHER" id="PTHR24345">
    <property type="entry name" value="SERINE/THREONINE-PROTEIN KINASE PLK"/>
    <property type="match status" value="1"/>
</dbReference>
<dbReference type="PANTHER" id="PTHR24345:SF44">
    <property type="entry name" value="SERINE_THREONINE-PROTEIN KINASE PLK2"/>
    <property type="match status" value="1"/>
</dbReference>
<dbReference type="Pfam" id="PF00069">
    <property type="entry name" value="Pkinase"/>
    <property type="match status" value="1"/>
</dbReference>
<dbReference type="Pfam" id="PF00659">
    <property type="entry name" value="POLO_box"/>
    <property type="match status" value="2"/>
</dbReference>
<dbReference type="SMART" id="SM00220">
    <property type="entry name" value="S_TKc"/>
    <property type="match status" value="1"/>
</dbReference>
<dbReference type="SUPFAM" id="SSF82615">
    <property type="entry name" value="Polo-box domain"/>
    <property type="match status" value="2"/>
</dbReference>
<dbReference type="SUPFAM" id="SSF56112">
    <property type="entry name" value="Protein kinase-like (PK-like)"/>
    <property type="match status" value="1"/>
</dbReference>
<dbReference type="PROSITE" id="PS50078">
    <property type="entry name" value="POLO_BOX"/>
    <property type="match status" value="2"/>
</dbReference>
<dbReference type="PROSITE" id="PS00107">
    <property type="entry name" value="PROTEIN_KINASE_ATP"/>
    <property type="match status" value="1"/>
</dbReference>
<dbReference type="PROSITE" id="PS50011">
    <property type="entry name" value="PROTEIN_KINASE_DOM"/>
    <property type="match status" value="1"/>
</dbReference>
<dbReference type="PROSITE" id="PS00108">
    <property type="entry name" value="PROTEIN_KINASE_ST"/>
    <property type="match status" value="1"/>
</dbReference>
<protein>
    <recommendedName>
        <fullName>Serine/threonine-protein kinase PLK2</fullName>
        <ecNumber>2.7.11.21</ecNumber>
    </recommendedName>
    <alternativeName>
        <fullName>Polo-like kinase 2</fullName>
        <shortName>PLK-2</shortName>
    </alternativeName>
    <alternativeName>
        <fullName>Serine/threonine-protein kinase SNK</fullName>
    </alternativeName>
    <alternativeName>
        <fullName>Serum-inducible kinase</fullName>
    </alternativeName>
</protein>
<keyword id="KW-0067">ATP-binding</keyword>
<keyword id="KW-0966">Cell projection</keyword>
<keyword id="KW-0963">Cytoplasm</keyword>
<keyword id="KW-0206">Cytoskeleton</keyword>
<keyword id="KW-0418">Kinase</keyword>
<keyword id="KW-0547">Nucleotide-binding</keyword>
<keyword id="KW-0597">Phosphoprotein</keyword>
<keyword id="KW-1185">Reference proteome</keyword>
<keyword id="KW-0677">Repeat</keyword>
<keyword id="KW-0723">Serine/threonine-protein kinase</keyword>
<keyword id="KW-0808">Transferase</keyword>
<keyword id="KW-0043">Tumor suppressor</keyword>
<comment type="function">
    <text evidence="6 7 10 11">Tumor suppressor serine/threonine-protein kinase involved in synaptic plasticity, centriole duplication and G1/S phase transition. Polo-like kinases act by binding and phosphorylating proteins that are already phosphorylated on a specific motif recognized by the POLO box domains. Phosphorylates CPAP, NPM1, RAPGEF2, RASGRF1, SNCA, SIPA1L1 and SYNGAP1. Plays a key role in synaptic plasticity and memory by regulating the Ras and Rap protein signaling: required for overactivity-dependent spine remodeling by phosphorylating the Ras activator RASGRF1 and the Rap inhibitor SIPA1L1 leading to their degradation by the proteasome. Conversely, phosphorylates the Rap activator RAPGEF2 and the Ras inhibitor SYNGAP1, promoting their activity. Also regulates synaptic plasticity independently of kinase activity, via its interaction with NSF that disrupts the interaction between NSF and the GRIA2 subunit of AMPARs, leading to a rapid rundown of AMPAR-mediated current that occludes long term depression. Required for procentriole formation and centriole duplication by phosphorylating CPAP and NPM1, respectively. Its induction by p53/TP53 suggests that it may participate in the mitotic checkpoint following stress.</text>
</comment>
<comment type="catalytic activity">
    <reaction>
        <text>L-seryl-[protein] + ATP = O-phospho-L-seryl-[protein] + ADP + H(+)</text>
        <dbReference type="Rhea" id="RHEA:17989"/>
        <dbReference type="Rhea" id="RHEA-COMP:9863"/>
        <dbReference type="Rhea" id="RHEA-COMP:11604"/>
        <dbReference type="ChEBI" id="CHEBI:15378"/>
        <dbReference type="ChEBI" id="CHEBI:29999"/>
        <dbReference type="ChEBI" id="CHEBI:30616"/>
        <dbReference type="ChEBI" id="CHEBI:83421"/>
        <dbReference type="ChEBI" id="CHEBI:456216"/>
        <dbReference type="EC" id="2.7.11.21"/>
    </reaction>
</comment>
<comment type="catalytic activity">
    <reaction>
        <text>L-threonyl-[protein] + ATP = O-phospho-L-threonyl-[protein] + ADP + H(+)</text>
        <dbReference type="Rhea" id="RHEA:46608"/>
        <dbReference type="Rhea" id="RHEA-COMP:11060"/>
        <dbReference type="Rhea" id="RHEA-COMP:11605"/>
        <dbReference type="ChEBI" id="CHEBI:15378"/>
        <dbReference type="ChEBI" id="CHEBI:30013"/>
        <dbReference type="ChEBI" id="CHEBI:30616"/>
        <dbReference type="ChEBI" id="CHEBI:61977"/>
        <dbReference type="ChEBI" id="CHEBI:456216"/>
        <dbReference type="EC" id="2.7.11.21"/>
    </reaction>
</comment>
<comment type="activity regulation">
    <text evidence="1">Activated by phosphorylation of Thr-236. Once activated, activity is stimulated by binding target proteins (By similarity).</text>
</comment>
<comment type="subunit">
    <text evidence="1">Interacts with NSF; causing NSF dissociation from GRIA2 (By similarity). Interacts with CIB1.</text>
</comment>
<comment type="subcellular location">
    <subcellularLocation>
        <location evidence="1">Cytoplasm</location>
        <location evidence="1">Cytoskeleton</location>
        <location evidence="1">Microtubule organizing center</location>
        <location evidence="1">Centrosome</location>
        <location evidence="1">Centriole</location>
    </subcellularLocation>
    <subcellularLocation>
        <location evidence="1">Cell projection</location>
        <location evidence="1">Dendrite</location>
    </subcellularLocation>
    <text evidence="1">Localizes to centrosomes during early G1 phase where it only associates to the mother centriole and then distributes equally to both mother and daughter centrioles at the onset of S phase.</text>
</comment>
<comment type="tissue specificity">
    <text evidence="9">Brain, lung and heart.</text>
</comment>
<comment type="developmental stage">
    <text evidence="6">Expressed in early G1, during G0-G1 transition as well as in cycling cells.</text>
</comment>
<comment type="induction">
    <text evidence="7 9">Directly regulated by p53/TP53. Induced by serum and phorbol ester.</text>
</comment>
<comment type="domain">
    <text evidence="1">The POLO box domains act as phosphopeptide-binding module that recognizes and binds serine-[phosphothreonine/phosphoserine]-(proline/X) motifs. PLK2 recognizes and binds docking proteins that are already phosphorylated on these motifs, and then phosphorylates them (By similarity).</text>
</comment>
<comment type="PTM">
    <text evidence="6">Catalytic activity is enhanced by phosphorylation of Thr-236.</text>
</comment>
<comment type="disruption phenotype">
    <text evidence="8 11">Embryos display a delay in skeletal development and retarded growth. Embryonic fibroblasts proliferated slowly and displayed a delayed entry into S phase. Mice display loss of dendritic spines and impaired memory formation.</text>
</comment>
<comment type="similarity">
    <text evidence="3">Belongs to the protein kinase superfamily. Ser/Thr protein kinase family. CDC5/Polo subfamily.</text>
</comment>
<evidence type="ECO:0000250" key="1"/>
<evidence type="ECO:0000255" key="2">
    <source>
        <dbReference type="PROSITE-ProRule" id="PRU00154"/>
    </source>
</evidence>
<evidence type="ECO:0000255" key="3">
    <source>
        <dbReference type="PROSITE-ProRule" id="PRU00159"/>
    </source>
</evidence>
<evidence type="ECO:0000255" key="4">
    <source>
        <dbReference type="PROSITE-ProRule" id="PRU10027"/>
    </source>
</evidence>
<evidence type="ECO:0000256" key="5">
    <source>
        <dbReference type="SAM" id="MobiDB-lite"/>
    </source>
</evidence>
<evidence type="ECO:0000269" key="6">
    <source>
    </source>
</evidence>
<evidence type="ECO:0000269" key="7">
    <source>
    </source>
</evidence>
<evidence type="ECO:0000269" key="8">
    <source>
    </source>
</evidence>
<evidence type="ECO:0000269" key="9">
    <source>
    </source>
</evidence>
<evidence type="ECO:0000269" key="10">
    <source>
    </source>
</evidence>
<evidence type="ECO:0000269" key="11">
    <source>
    </source>
</evidence>
<evidence type="ECO:0000305" key="12"/>
<gene>
    <name type="primary">Plk2</name>
    <name type="synonym">Snk</name>
</gene>
<feature type="chain" id="PRO_0000086562" description="Serine/threonine-protein kinase PLK2">
    <location>
        <begin position="1"/>
        <end position="682"/>
    </location>
</feature>
<feature type="domain" description="Protein kinase" evidence="3">
    <location>
        <begin position="79"/>
        <end position="331"/>
    </location>
</feature>
<feature type="domain" description="POLO box 1" evidence="2">
    <location>
        <begin position="500"/>
        <end position="578"/>
    </location>
</feature>
<feature type="domain" description="POLO box 2" evidence="2">
    <location>
        <begin position="598"/>
        <end position="682"/>
    </location>
</feature>
<feature type="region of interest" description="Disordered" evidence="5">
    <location>
        <begin position="25"/>
        <end position="67"/>
    </location>
</feature>
<feature type="region of interest" description="Disordered" evidence="5">
    <location>
        <begin position="403"/>
        <end position="432"/>
    </location>
</feature>
<feature type="compositionally biased region" description="Polar residues" evidence="5">
    <location>
        <begin position="36"/>
        <end position="48"/>
    </location>
</feature>
<feature type="active site" description="Proton acceptor" evidence="3 4">
    <location>
        <position position="202"/>
    </location>
</feature>
<feature type="binding site" evidence="3">
    <location>
        <begin position="85"/>
        <end position="93"/>
    </location>
    <ligand>
        <name>ATP</name>
        <dbReference type="ChEBI" id="CHEBI:30616"/>
    </ligand>
</feature>
<feature type="binding site" evidence="12">
    <location>
        <position position="108"/>
    </location>
    <ligand>
        <name>ATP</name>
        <dbReference type="ChEBI" id="CHEBI:30616"/>
    </ligand>
</feature>
<feature type="modified residue" description="Phosphothreonine" evidence="6">
    <location>
        <position position="236"/>
    </location>
</feature>
<feature type="mutagenesis site" description="In DN mutant; Loss of kinase activity; leading to disrupted Ras and Rap protein signaling, altered spine morphology and aberrant memory formation in mice." evidence="6 11">
    <original>K</original>
    <variation>M</variation>
    <location>
        <position position="108"/>
    </location>
</feature>
<feature type="mutagenesis site" description="Does not significantly affect kinase activity." evidence="6 7">
    <original>T</original>
    <variation>D</variation>
    <variation>V</variation>
    <location>
        <position position="236"/>
    </location>
</feature>
<feature type="mutagenesis site" description="Mimicks phosphorylation state, leading to increased activity." evidence="6 7">
    <original>T</original>
    <variation>E</variation>
    <location>
        <position position="236"/>
    </location>
</feature>
<name>PLK2_MOUSE</name>